<gene>
    <name evidence="1" type="primary">gltX</name>
    <name type="ordered locus">FRAAL5260</name>
</gene>
<keyword id="KW-0030">Aminoacyl-tRNA synthetase</keyword>
<keyword id="KW-0067">ATP-binding</keyword>
<keyword id="KW-0963">Cytoplasm</keyword>
<keyword id="KW-0436">Ligase</keyword>
<keyword id="KW-0479">Metal-binding</keyword>
<keyword id="KW-0547">Nucleotide-binding</keyword>
<keyword id="KW-0648">Protein biosynthesis</keyword>
<keyword id="KW-1185">Reference proteome</keyword>
<keyword id="KW-0862">Zinc</keyword>
<organism>
    <name type="scientific">Frankia alni (strain DSM 45986 / CECT 9034 / ACN14a)</name>
    <dbReference type="NCBI Taxonomy" id="326424"/>
    <lineage>
        <taxon>Bacteria</taxon>
        <taxon>Bacillati</taxon>
        <taxon>Actinomycetota</taxon>
        <taxon>Actinomycetes</taxon>
        <taxon>Frankiales</taxon>
        <taxon>Frankiaceae</taxon>
        <taxon>Frankia</taxon>
    </lineage>
</organism>
<protein>
    <recommendedName>
        <fullName evidence="1">Glutamate--tRNA ligase</fullName>
        <ecNumber evidence="1">6.1.1.17</ecNumber>
    </recommendedName>
    <alternativeName>
        <fullName evidence="1">Glutamyl-tRNA synthetase</fullName>
        <shortName evidence="1">GluRS</shortName>
    </alternativeName>
</protein>
<reference key="1">
    <citation type="journal article" date="2007" name="Genome Res.">
        <title>Genome characteristics of facultatively symbiotic Frankia sp. strains reflect host range and host plant biogeography.</title>
        <authorList>
            <person name="Normand P."/>
            <person name="Lapierre P."/>
            <person name="Tisa L.S."/>
            <person name="Gogarten J.P."/>
            <person name="Alloisio N."/>
            <person name="Bagnarol E."/>
            <person name="Bassi C.A."/>
            <person name="Berry A.M."/>
            <person name="Bickhart D.M."/>
            <person name="Choisne N."/>
            <person name="Couloux A."/>
            <person name="Cournoyer B."/>
            <person name="Cruveiller S."/>
            <person name="Daubin V."/>
            <person name="Demange N."/>
            <person name="Francino M.P."/>
            <person name="Goltsman E."/>
            <person name="Huang Y."/>
            <person name="Kopp O.R."/>
            <person name="Labarre L."/>
            <person name="Lapidus A."/>
            <person name="Lavire C."/>
            <person name="Marechal J."/>
            <person name="Martinez M."/>
            <person name="Mastronunzio J.E."/>
            <person name="Mullin B.C."/>
            <person name="Niemann J."/>
            <person name="Pujic P."/>
            <person name="Rawnsley T."/>
            <person name="Rouy Z."/>
            <person name="Schenowitz C."/>
            <person name="Sellstedt A."/>
            <person name="Tavares F."/>
            <person name="Tomkins J.P."/>
            <person name="Vallenet D."/>
            <person name="Valverde C."/>
            <person name="Wall L.G."/>
            <person name="Wang Y."/>
            <person name="Medigue C."/>
            <person name="Benson D.R."/>
        </authorList>
    </citation>
    <scope>NUCLEOTIDE SEQUENCE [LARGE SCALE GENOMIC DNA]</scope>
    <source>
        <strain>DSM 45986 / CECT 9034 / ACN14a</strain>
    </source>
</reference>
<accession>Q0RF57</accession>
<name>SYE_FRAAA</name>
<proteinExistence type="inferred from homology"/>
<comment type="function">
    <text evidence="1">Catalyzes the attachment of glutamate to tRNA(Glu) in a two-step reaction: glutamate is first activated by ATP to form Glu-AMP and then transferred to the acceptor end of tRNA(Glu).</text>
</comment>
<comment type="catalytic activity">
    <reaction evidence="1">
        <text>tRNA(Glu) + L-glutamate + ATP = L-glutamyl-tRNA(Glu) + AMP + diphosphate</text>
        <dbReference type="Rhea" id="RHEA:23540"/>
        <dbReference type="Rhea" id="RHEA-COMP:9663"/>
        <dbReference type="Rhea" id="RHEA-COMP:9680"/>
        <dbReference type="ChEBI" id="CHEBI:29985"/>
        <dbReference type="ChEBI" id="CHEBI:30616"/>
        <dbReference type="ChEBI" id="CHEBI:33019"/>
        <dbReference type="ChEBI" id="CHEBI:78442"/>
        <dbReference type="ChEBI" id="CHEBI:78520"/>
        <dbReference type="ChEBI" id="CHEBI:456215"/>
        <dbReference type="EC" id="6.1.1.17"/>
    </reaction>
</comment>
<comment type="cofactor">
    <cofactor evidence="1">
        <name>Zn(2+)</name>
        <dbReference type="ChEBI" id="CHEBI:29105"/>
    </cofactor>
    <text evidence="1">Binds 1 zinc ion per subunit.</text>
</comment>
<comment type="subunit">
    <text evidence="1">Monomer.</text>
</comment>
<comment type="subcellular location">
    <subcellularLocation>
        <location evidence="1">Cytoplasm</location>
    </subcellularLocation>
</comment>
<comment type="similarity">
    <text evidence="1">Belongs to the class-I aminoacyl-tRNA synthetase family. Glutamate--tRNA ligase type 1 subfamily.</text>
</comment>
<feature type="chain" id="PRO_1000001899" description="Glutamate--tRNA ligase">
    <location>
        <begin position="1"/>
        <end position="470"/>
    </location>
</feature>
<feature type="short sequence motif" description="'HIGH' region" evidence="1">
    <location>
        <begin position="12"/>
        <end position="22"/>
    </location>
</feature>
<feature type="short sequence motif" description="'KMSKS' region" evidence="1">
    <location>
        <begin position="236"/>
        <end position="240"/>
    </location>
</feature>
<feature type="binding site" evidence="1">
    <location>
        <position position="103"/>
    </location>
    <ligand>
        <name>Zn(2+)</name>
        <dbReference type="ChEBI" id="CHEBI:29105"/>
    </ligand>
</feature>
<feature type="binding site" evidence="1">
    <location>
        <position position="105"/>
    </location>
    <ligand>
        <name>Zn(2+)</name>
        <dbReference type="ChEBI" id="CHEBI:29105"/>
    </ligand>
</feature>
<feature type="binding site" evidence="1">
    <location>
        <position position="125"/>
    </location>
    <ligand>
        <name>Zn(2+)</name>
        <dbReference type="ChEBI" id="CHEBI:29105"/>
    </ligand>
</feature>
<feature type="binding site" evidence="1">
    <location>
        <position position="127"/>
    </location>
    <ligand>
        <name>Zn(2+)</name>
        <dbReference type="ChEBI" id="CHEBI:29105"/>
    </ligand>
</feature>
<feature type="binding site" evidence="1">
    <location>
        <position position="239"/>
    </location>
    <ligand>
        <name>ATP</name>
        <dbReference type="ChEBI" id="CHEBI:30616"/>
    </ligand>
</feature>
<evidence type="ECO:0000255" key="1">
    <source>
        <dbReference type="HAMAP-Rule" id="MF_00022"/>
    </source>
</evidence>
<sequence length="470" mass="51235">MGSGRVRVRFAPSPTGIFHVGGARSALFNWLVALRAGGDFVLRVEDTDASRNRPEWTDGIISALDWLGISPGRYEGPVLQSSRADRHRAAAVRLREAGLAYFCDCTREALAERTGNAQHGYDGFCRDRGLEPGPGRALRFRTPDDGVTTVHDLIRGTPEFPNDTIEDFVIARADGSAVFLLANVVDDLEMGITHVIRGEEHLSNTPKQQLLWAALGAAEPPVWAHVPVIVNEKRQKLSKRRDKVALESYRDEGYLPGAMKNYLMLLGWAPSGDDEIVPWETIESTFDLADVKPSPAFFDEKKLRAFNGEYIRALSVEEFIAAVEPWLAPPAAPWAADAFDAGTFAAVAGLAQSRVSVLAEIVPMVDFLFLPAAPVDDAAWAKAMKGPAAQLLADVHDVFGKIEWDAETLKATLAELGERHGLKLAKAQAPVRVAVTGRTVGLPLFESLEVFGREATRRRIAAARDRLAAG</sequence>
<dbReference type="EC" id="6.1.1.17" evidence="1"/>
<dbReference type="EMBL" id="CT573213">
    <property type="protein sequence ID" value="CAJ63893.1"/>
    <property type="molecule type" value="Genomic_DNA"/>
</dbReference>
<dbReference type="RefSeq" id="WP_011606351.1">
    <property type="nucleotide sequence ID" value="NC_008278.1"/>
</dbReference>
<dbReference type="SMR" id="Q0RF57"/>
<dbReference type="STRING" id="326424.FRAAL5260"/>
<dbReference type="KEGG" id="fal:FRAAL5260"/>
<dbReference type="eggNOG" id="COG0008">
    <property type="taxonomic scope" value="Bacteria"/>
</dbReference>
<dbReference type="HOGENOM" id="CLU_015768_6_0_11"/>
<dbReference type="OrthoDB" id="9807503at2"/>
<dbReference type="Proteomes" id="UP000000657">
    <property type="component" value="Chromosome"/>
</dbReference>
<dbReference type="GO" id="GO:0005829">
    <property type="term" value="C:cytosol"/>
    <property type="evidence" value="ECO:0007669"/>
    <property type="project" value="TreeGrafter"/>
</dbReference>
<dbReference type="GO" id="GO:0005524">
    <property type="term" value="F:ATP binding"/>
    <property type="evidence" value="ECO:0007669"/>
    <property type="project" value="UniProtKB-UniRule"/>
</dbReference>
<dbReference type="GO" id="GO:0004818">
    <property type="term" value="F:glutamate-tRNA ligase activity"/>
    <property type="evidence" value="ECO:0007669"/>
    <property type="project" value="UniProtKB-UniRule"/>
</dbReference>
<dbReference type="GO" id="GO:0000049">
    <property type="term" value="F:tRNA binding"/>
    <property type="evidence" value="ECO:0007669"/>
    <property type="project" value="InterPro"/>
</dbReference>
<dbReference type="GO" id="GO:0008270">
    <property type="term" value="F:zinc ion binding"/>
    <property type="evidence" value="ECO:0007669"/>
    <property type="project" value="UniProtKB-UniRule"/>
</dbReference>
<dbReference type="GO" id="GO:0006424">
    <property type="term" value="P:glutamyl-tRNA aminoacylation"/>
    <property type="evidence" value="ECO:0007669"/>
    <property type="project" value="UniProtKB-UniRule"/>
</dbReference>
<dbReference type="CDD" id="cd00808">
    <property type="entry name" value="GluRS_core"/>
    <property type="match status" value="1"/>
</dbReference>
<dbReference type="Gene3D" id="1.10.10.350">
    <property type="match status" value="1"/>
</dbReference>
<dbReference type="Gene3D" id="3.40.50.620">
    <property type="entry name" value="HUPs"/>
    <property type="match status" value="1"/>
</dbReference>
<dbReference type="HAMAP" id="MF_00022">
    <property type="entry name" value="Glu_tRNA_synth_type1"/>
    <property type="match status" value="1"/>
</dbReference>
<dbReference type="InterPro" id="IPR045462">
    <property type="entry name" value="aa-tRNA-synth_I_cd-bd"/>
</dbReference>
<dbReference type="InterPro" id="IPR020751">
    <property type="entry name" value="aa-tRNA-synth_I_codon-bd_sub2"/>
</dbReference>
<dbReference type="InterPro" id="IPR001412">
    <property type="entry name" value="aa-tRNA-synth_I_CS"/>
</dbReference>
<dbReference type="InterPro" id="IPR008925">
    <property type="entry name" value="aa_tRNA-synth_I_cd-bd_sf"/>
</dbReference>
<dbReference type="InterPro" id="IPR004527">
    <property type="entry name" value="Glu-tRNA-ligase_bac/mito"/>
</dbReference>
<dbReference type="InterPro" id="IPR000924">
    <property type="entry name" value="Glu/Gln-tRNA-synth"/>
</dbReference>
<dbReference type="InterPro" id="IPR020058">
    <property type="entry name" value="Glu/Gln-tRNA-synth_Ib_cat-dom"/>
</dbReference>
<dbReference type="InterPro" id="IPR049940">
    <property type="entry name" value="GluQ/Sye"/>
</dbReference>
<dbReference type="InterPro" id="IPR033910">
    <property type="entry name" value="GluRS_core"/>
</dbReference>
<dbReference type="InterPro" id="IPR014729">
    <property type="entry name" value="Rossmann-like_a/b/a_fold"/>
</dbReference>
<dbReference type="NCBIfam" id="TIGR00464">
    <property type="entry name" value="gltX_bact"/>
    <property type="match status" value="1"/>
</dbReference>
<dbReference type="PANTHER" id="PTHR43311">
    <property type="entry name" value="GLUTAMATE--TRNA LIGASE"/>
    <property type="match status" value="1"/>
</dbReference>
<dbReference type="PANTHER" id="PTHR43311:SF2">
    <property type="entry name" value="GLUTAMATE--TRNA LIGASE, MITOCHONDRIAL-RELATED"/>
    <property type="match status" value="1"/>
</dbReference>
<dbReference type="Pfam" id="PF19269">
    <property type="entry name" value="Anticodon_2"/>
    <property type="match status" value="1"/>
</dbReference>
<dbReference type="Pfam" id="PF00749">
    <property type="entry name" value="tRNA-synt_1c"/>
    <property type="match status" value="1"/>
</dbReference>
<dbReference type="PRINTS" id="PR00987">
    <property type="entry name" value="TRNASYNTHGLU"/>
</dbReference>
<dbReference type="SUPFAM" id="SSF48163">
    <property type="entry name" value="An anticodon-binding domain of class I aminoacyl-tRNA synthetases"/>
    <property type="match status" value="1"/>
</dbReference>
<dbReference type="SUPFAM" id="SSF52374">
    <property type="entry name" value="Nucleotidylyl transferase"/>
    <property type="match status" value="1"/>
</dbReference>
<dbReference type="PROSITE" id="PS00178">
    <property type="entry name" value="AA_TRNA_LIGASE_I"/>
    <property type="match status" value="1"/>
</dbReference>